<comment type="catalytic activity">
    <reaction evidence="1">
        <text>L-arginine + H2O = L-citrulline + NH4(+)</text>
        <dbReference type="Rhea" id="RHEA:19597"/>
        <dbReference type="ChEBI" id="CHEBI:15377"/>
        <dbReference type="ChEBI" id="CHEBI:28938"/>
        <dbReference type="ChEBI" id="CHEBI:32682"/>
        <dbReference type="ChEBI" id="CHEBI:57743"/>
        <dbReference type="EC" id="3.5.3.6"/>
    </reaction>
</comment>
<comment type="pathway">
    <text evidence="1">Amino-acid degradation; L-arginine degradation via ADI pathway; carbamoyl phosphate from L-arginine: step 1/2.</text>
</comment>
<comment type="subcellular location">
    <subcellularLocation>
        <location evidence="1">Cytoplasm</location>
    </subcellularLocation>
</comment>
<comment type="similarity">
    <text evidence="1">Belongs to the arginine deiminase family.</text>
</comment>
<reference key="1">
    <citation type="journal article" date="2009" name="BMC Genomics">
        <title>Genome evolution driven by host adaptations results in a more virulent and antimicrobial-resistant Streptococcus pneumoniae serotype 14.</title>
        <authorList>
            <person name="Ding F."/>
            <person name="Tang P."/>
            <person name="Hsu M.-H."/>
            <person name="Cui P."/>
            <person name="Hu S."/>
            <person name="Yu J."/>
            <person name="Chiu C.-H."/>
        </authorList>
    </citation>
    <scope>NUCLEOTIDE SEQUENCE [LARGE SCALE GENOMIC DNA]</scope>
    <source>
        <strain>CGSP14</strain>
    </source>
</reference>
<name>ARCA_STRPS</name>
<sequence>MSSHPIQVFSEIGKLKKVMLHRPGKELENLLPDYLERLLFDDIPFLEDAQKEHDAFAQALRDEGIEVLYLEQLAAESLTSPEIRDQFIEEYLDEANIRDRQTKVAIRELLHGIKDNQELVEKTMAGIQKVELPEIPDEAKDLTDLVESDYPFAIDPMPNLYFTRDPFATIGNAVSLNHMFADTRNRETLYGKYIFKYHPIYGGKVDLVYNREEDTRIEGGDELVLSKDVLAVGISQRTDAASIEKLLVNIFKKNVGFKKVLAFEFANNRKFMHLDTVFTMVDYDKFTIHPEIEGDLHVYSVTYENEKLKIVEEKGDLAELLAQNLGVEKVHLIRCGGGNIVAAAREQWNDGSNTLTIAPGVVVVYDRNTVTNKILEEYGLRLIKIRGSELVRGRGGPRCMSMPFEREEV</sequence>
<proteinExistence type="inferred from homology"/>
<feature type="chain" id="PRO_1000100748" description="Arginine deiminase">
    <location>
        <begin position="1"/>
        <end position="409"/>
    </location>
</feature>
<feature type="active site" description="Amidino-cysteine intermediate" evidence="1">
    <location>
        <position position="399"/>
    </location>
</feature>
<dbReference type="EC" id="3.5.3.6" evidence="1"/>
<dbReference type="EMBL" id="CP001033">
    <property type="protein sequence ID" value="ACB91370.1"/>
    <property type="molecule type" value="Genomic_DNA"/>
</dbReference>
<dbReference type="RefSeq" id="WP_000094616.1">
    <property type="nucleotide sequence ID" value="NC_010582.1"/>
</dbReference>
<dbReference type="SMR" id="B2ING9"/>
<dbReference type="GeneID" id="45652626"/>
<dbReference type="KEGG" id="spw:SPCG_2118"/>
<dbReference type="HOGENOM" id="CLU_052662_0_1_9"/>
<dbReference type="UniPathway" id="UPA00254">
    <property type="reaction ID" value="UER00364"/>
</dbReference>
<dbReference type="GO" id="GO:0005737">
    <property type="term" value="C:cytoplasm"/>
    <property type="evidence" value="ECO:0007669"/>
    <property type="project" value="UniProtKB-SubCell"/>
</dbReference>
<dbReference type="GO" id="GO:0016990">
    <property type="term" value="F:arginine deiminase activity"/>
    <property type="evidence" value="ECO:0007669"/>
    <property type="project" value="UniProtKB-UniRule"/>
</dbReference>
<dbReference type="GO" id="GO:0019547">
    <property type="term" value="P:arginine catabolic process to ornithine"/>
    <property type="evidence" value="ECO:0007669"/>
    <property type="project" value="UniProtKB-UniRule"/>
</dbReference>
<dbReference type="GO" id="GO:0019546">
    <property type="term" value="P:arginine deiminase pathway"/>
    <property type="evidence" value="ECO:0007669"/>
    <property type="project" value="TreeGrafter"/>
</dbReference>
<dbReference type="FunFam" id="1.10.3930.10:FF:000003">
    <property type="entry name" value="Arginine deiminase"/>
    <property type="match status" value="1"/>
</dbReference>
<dbReference type="Gene3D" id="1.10.3930.10">
    <property type="entry name" value="Arginine deiminase"/>
    <property type="match status" value="1"/>
</dbReference>
<dbReference type="Gene3D" id="3.75.10.10">
    <property type="entry name" value="L-arginine/glycine Amidinotransferase, Chain A"/>
    <property type="match status" value="1"/>
</dbReference>
<dbReference type="HAMAP" id="MF_00242">
    <property type="entry name" value="Arg_deiminase"/>
    <property type="match status" value="1"/>
</dbReference>
<dbReference type="InterPro" id="IPR003876">
    <property type="entry name" value="Arg_deiminase"/>
</dbReference>
<dbReference type="NCBIfam" id="TIGR01078">
    <property type="entry name" value="arcA"/>
    <property type="match status" value="1"/>
</dbReference>
<dbReference type="NCBIfam" id="NF002381">
    <property type="entry name" value="PRK01388.1"/>
    <property type="match status" value="1"/>
</dbReference>
<dbReference type="PANTHER" id="PTHR47271">
    <property type="entry name" value="ARGININE DEIMINASE"/>
    <property type="match status" value="1"/>
</dbReference>
<dbReference type="PANTHER" id="PTHR47271:SF2">
    <property type="entry name" value="ARGININE DEIMINASE"/>
    <property type="match status" value="1"/>
</dbReference>
<dbReference type="Pfam" id="PF02274">
    <property type="entry name" value="ADI"/>
    <property type="match status" value="1"/>
</dbReference>
<dbReference type="PIRSF" id="PIRSF006356">
    <property type="entry name" value="Arg_deiminase"/>
    <property type="match status" value="1"/>
</dbReference>
<dbReference type="PRINTS" id="PR01466">
    <property type="entry name" value="ARGDEIMINASE"/>
</dbReference>
<dbReference type="SUPFAM" id="SSF55909">
    <property type="entry name" value="Pentein"/>
    <property type="match status" value="1"/>
</dbReference>
<keyword id="KW-0056">Arginine metabolism</keyword>
<keyword id="KW-0963">Cytoplasm</keyword>
<keyword id="KW-0378">Hydrolase</keyword>
<gene>
    <name evidence="1" type="primary">arcA</name>
    <name type="ordered locus">SPCG_2118</name>
</gene>
<organism>
    <name type="scientific">Streptococcus pneumoniae (strain CGSP14)</name>
    <dbReference type="NCBI Taxonomy" id="516950"/>
    <lineage>
        <taxon>Bacteria</taxon>
        <taxon>Bacillati</taxon>
        <taxon>Bacillota</taxon>
        <taxon>Bacilli</taxon>
        <taxon>Lactobacillales</taxon>
        <taxon>Streptococcaceae</taxon>
        <taxon>Streptococcus</taxon>
    </lineage>
</organism>
<protein>
    <recommendedName>
        <fullName evidence="1">Arginine deiminase</fullName>
        <shortName evidence="1">ADI</shortName>
        <ecNumber evidence="1">3.5.3.6</ecNumber>
    </recommendedName>
    <alternativeName>
        <fullName evidence="1">Arginine dihydrolase</fullName>
        <shortName evidence="1">AD</shortName>
    </alternativeName>
</protein>
<accession>B2ING9</accession>
<evidence type="ECO:0000255" key="1">
    <source>
        <dbReference type="HAMAP-Rule" id="MF_00242"/>
    </source>
</evidence>